<sequence length="319" mass="34634">MDLLTLEGWLDNTAFAVLFLTMLLYWCGAAFPQWPLLTAAGRTGMAIANLCITGLLAARWIEGGYFPISNLYESLFFLCWGLTAMHFVAESISGQPLVGVVTAPVAMGITAFAALSLPPEMQQSAPLVPALKSNWLMMHVSVMMLSYATLMVGSLLAIALLVVTWGQPVNLKGSSVGTGSFRSRRPEPSLEASTGNGGTTVLTPPALQLSLQRLTLAETLDNLSYRMIGLGFPLLTIGIISGAVWANEAWGAPWSWDPKETWALIVWLVYAAYLHARMTRDWQGRKPAILATVGFGVVWVCYLGVNLLGKGLHSYGWFF</sequence>
<dbReference type="EMBL" id="BA000039">
    <property type="protein sequence ID" value="BAC09167.1"/>
    <property type="molecule type" value="Genomic_DNA"/>
</dbReference>
<dbReference type="RefSeq" id="NP_682405.1">
    <property type="nucleotide sequence ID" value="NC_004113.1"/>
</dbReference>
<dbReference type="RefSeq" id="WP_011057454.1">
    <property type="nucleotide sequence ID" value="NC_004113.1"/>
</dbReference>
<dbReference type="SMR" id="Q8DIH3"/>
<dbReference type="STRING" id="197221.gene:10748217"/>
<dbReference type="EnsemblBacteria" id="BAC09167">
    <property type="protein sequence ID" value="BAC09167"/>
    <property type="gene ID" value="BAC09167"/>
</dbReference>
<dbReference type="KEGG" id="tel:tlr1615"/>
<dbReference type="PATRIC" id="fig|197221.4.peg.1694"/>
<dbReference type="eggNOG" id="COG0755">
    <property type="taxonomic scope" value="Bacteria"/>
</dbReference>
<dbReference type="Proteomes" id="UP000000440">
    <property type="component" value="Chromosome"/>
</dbReference>
<dbReference type="GO" id="GO:0031676">
    <property type="term" value="C:plasma membrane-derived thylakoid membrane"/>
    <property type="evidence" value="ECO:0007669"/>
    <property type="project" value="UniProtKB-SubCell"/>
</dbReference>
<dbReference type="GO" id="GO:0020037">
    <property type="term" value="F:heme binding"/>
    <property type="evidence" value="ECO:0007669"/>
    <property type="project" value="InterPro"/>
</dbReference>
<dbReference type="GO" id="GO:0017004">
    <property type="term" value="P:cytochrome complex assembly"/>
    <property type="evidence" value="ECO:0007669"/>
    <property type="project" value="UniProtKB-UniRule"/>
</dbReference>
<dbReference type="HAMAP" id="MF_01391">
    <property type="entry name" value="CytC_CcsA"/>
    <property type="match status" value="1"/>
</dbReference>
<dbReference type="InterPro" id="IPR002541">
    <property type="entry name" value="Cyt_c_assembly"/>
</dbReference>
<dbReference type="InterPro" id="IPR017562">
    <property type="entry name" value="Cyt_c_biogenesis_CcsA"/>
</dbReference>
<dbReference type="InterPro" id="IPR045062">
    <property type="entry name" value="Cyt_c_biogenesis_CcsA/CcmC"/>
</dbReference>
<dbReference type="NCBIfam" id="TIGR03144">
    <property type="entry name" value="cytochr_II_ccsB"/>
    <property type="match status" value="1"/>
</dbReference>
<dbReference type="PANTHER" id="PTHR30071:SF1">
    <property type="entry name" value="CYTOCHROME B_B6 PROTEIN-RELATED"/>
    <property type="match status" value="1"/>
</dbReference>
<dbReference type="PANTHER" id="PTHR30071">
    <property type="entry name" value="HEME EXPORTER PROTEIN C"/>
    <property type="match status" value="1"/>
</dbReference>
<dbReference type="Pfam" id="PF01578">
    <property type="entry name" value="Cytochrom_C_asm"/>
    <property type="match status" value="1"/>
</dbReference>
<protein>
    <recommendedName>
        <fullName evidence="2">Cytochrome c biogenesis protein CcsA</fullName>
    </recommendedName>
</protein>
<reference key="1">
    <citation type="journal article" date="2002" name="DNA Res.">
        <title>Complete genome structure of the thermophilic cyanobacterium Thermosynechococcus elongatus BP-1.</title>
        <authorList>
            <person name="Nakamura Y."/>
            <person name="Kaneko T."/>
            <person name="Sato S."/>
            <person name="Ikeuchi M."/>
            <person name="Katoh H."/>
            <person name="Sasamoto S."/>
            <person name="Watanabe A."/>
            <person name="Iriguchi M."/>
            <person name="Kawashima K."/>
            <person name="Kimura T."/>
            <person name="Kishida Y."/>
            <person name="Kiyokawa C."/>
            <person name="Kohara M."/>
            <person name="Matsumoto M."/>
            <person name="Matsuno A."/>
            <person name="Nakazaki N."/>
            <person name="Shimpo S."/>
            <person name="Sugimoto M."/>
            <person name="Takeuchi C."/>
            <person name="Yamada M."/>
            <person name="Tabata S."/>
        </authorList>
    </citation>
    <scope>NUCLEOTIDE SEQUENCE [LARGE SCALE GENOMIC DNA]</scope>
    <source>
        <strain>NIES-2133 / IAM M-273 / BP-1</strain>
    </source>
</reference>
<feature type="chain" id="PRO_0000353714" description="Cytochrome c biogenesis protein CcsA">
    <location>
        <begin position="1"/>
        <end position="319"/>
    </location>
</feature>
<feature type="transmembrane region" description="Helical" evidence="2">
    <location>
        <begin position="14"/>
        <end position="34"/>
    </location>
</feature>
<feature type="transmembrane region" description="Helical" evidence="2">
    <location>
        <begin position="46"/>
        <end position="66"/>
    </location>
</feature>
<feature type="transmembrane region" description="Helical" evidence="2">
    <location>
        <begin position="74"/>
        <end position="94"/>
    </location>
</feature>
<feature type="transmembrane region" description="Helical" evidence="2">
    <location>
        <begin position="97"/>
        <end position="117"/>
    </location>
</feature>
<feature type="transmembrane region" description="Helical" evidence="2">
    <location>
        <begin position="142"/>
        <end position="162"/>
    </location>
</feature>
<feature type="transmembrane region" description="Helical" evidence="2">
    <location>
        <begin position="227"/>
        <end position="247"/>
    </location>
</feature>
<feature type="transmembrane region" description="Helical" evidence="2">
    <location>
        <begin position="254"/>
        <end position="274"/>
    </location>
</feature>
<feature type="transmembrane region" description="Helical" evidence="2">
    <location>
        <begin position="288"/>
        <end position="308"/>
    </location>
</feature>
<feature type="region of interest" description="Disordered" evidence="3">
    <location>
        <begin position="175"/>
        <end position="201"/>
    </location>
</feature>
<feature type="compositionally biased region" description="Polar residues" evidence="3">
    <location>
        <begin position="191"/>
        <end position="201"/>
    </location>
</feature>
<gene>
    <name evidence="2" type="primary">ccsA</name>
    <name type="ordered locus">tlr1615</name>
</gene>
<name>CCSA_THEVB</name>
<keyword id="KW-0201">Cytochrome c-type biogenesis</keyword>
<keyword id="KW-0472">Membrane</keyword>
<keyword id="KW-1185">Reference proteome</keyword>
<keyword id="KW-0793">Thylakoid</keyword>
<keyword id="KW-0812">Transmembrane</keyword>
<keyword id="KW-1133">Transmembrane helix</keyword>
<organism>
    <name type="scientific">Thermosynechococcus vestitus (strain NIES-2133 / IAM M-273 / BP-1)</name>
    <dbReference type="NCBI Taxonomy" id="197221"/>
    <lineage>
        <taxon>Bacteria</taxon>
        <taxon>Bacillati</taxon>
        <taxon>Cyanobacteriota</taxon>
        <taxon>Cyanophyceae</taxon>
        <taxon>Acaryochloridales</taxon>
        <taxon>Thermosynechococcaceae</taxon>
        <taxon>Thermosynechococcus</taxon>
    </lineage>
</organism>
<proteinExistence type="inferred from homology"/>
<accession>Q8DIH3</accession>
<comment type="function">
    <text evidence="2">Required during biogenesis of c-type cytochromes (cytochrome c6 and cytochrome f) at the step of heme attachment.</text>
</comment>
<comment type="subunit">
    <text evidence="1">May interact with ccs1.</text>
</comment>
<comment type="subcellular location">
    <subcellularLocation>
        <location evidence="2">Cellular thylakoid membrane</location>
        <topology evidence="2">Multi-pass membrane protein</topology>
    </subcellularLocation>
</comment>
<comment type="similarity">
    <text evidence="2">Belongs to the CcmF/CycK/Ccl1/NrfE/CcsA family.</text>
</comment>
<evidence type="ECO:0000250" key="1"/>
<evidence type="ECO:0000255" key="2">
    <source>
        <dbReference type="HAMAP-Rule" id="MF_01391"/>
    </source>
</evidence>
<evidence type="ECO:0000256" key="3">
    <source>
        <dbReference type="SAM" id="MobiDB-lite"/>
    </source>
</evidence>